<reference key="1">
    <citation type="journal article" date="1991" name="Virology">
        <title>Structure of the glycoprotein gene of sonchus yellow net virus, a plant rhabdovirus.</title>
        <authorList>
            <person name="Goldberg K.B."/>
            <person name="Modrell B."/>
            <person name="Hillman B.I."/>
            <person name="Heaton L.A."/>
            <person name="Choi T.J."/>
            <person name="Jackson A.O."/>
        </authorList>
    </citation>
    <scope>NUCLEOTIDE SEQUENCE [MRNA]</scope>
    <source>
        <strain>ATCC PV-263</strain>
    </source>
</reference>
<feature type="signal peptide" evidence="2">
    <location>
        <begin position="1"/>
        <end position="17"/>
    </location>
</feature>
<feature type="chain" id="PRO_0000041000" description="Spike glycoprotein">
    <location>
        <begin position="18"/>
        <end position="632"/>
    </location>
</feature>
<feature type="transmembrane region" description="Helical" evidence="2">
    <location>
        <begin position="560"/>
        <end position="578"/>
    </location>
</feature>
<feature type="glycosylation site" description="N-linked (GlcNAc...) asparagine; by host" evidence="2">
    <location>
        <position position="93"/>
    </location>
</feature>
<feature type="glycosylation site" description="N-linked (GlcNAc...) asparagine; by host" evidence="2">
    <location>
        <position position="385"/>
    </location>
</feature>
<feature type="glycosylation site" description="N-linked (GlcNAc...) asparagine; by host" evidence="2">
    <location>
        <position position="501"/>
    </location>
</feature>
<feature type="glycosylation site" description="N-linked (GlcNAc...) asparagine; by host" evidence="2">
    <location>
        <position position="512"/>
    </location>
</feature>
<feature type="glycosylation site" description="N-linked (GlcNAc...) asparagine; by host" evidence="2">
    <location>
        <position position="541"/>
    </location>
</feature>
<evidence type="ECO:0000250" key="1"/>
<evidence type="ECO:0000255" key="2"/>
<evidence type="ECO:0000305" key="3"/>
<organismHost>
    <name type="scientific">Aphis</name>
    <dbReference type="NCBI Taxonomy" id="80764"/>
</organismHost>
<organismHost>
    <name type="scientific">Bidens pilosa</name>
    <name type="common">Hairy beggarticks</name>
    <name type="synonym">Cobbler's pegs</name>
    <dbReference type="NCBI Taxonomy" id="42337"/>
</organismHost>
<organismHost>
    <name type="scientific">Lactuca sativa</name>
    <name type="common">Garden lettuce</name>
    <dbReference type="NCBI Taxonomy" id="4236"/>
</organismHost>
<organismHost>
    <name type="scientific">Sonchus oleraceus</name>
    <name type="common">Common sowthistle</name>
    <dbReference type="NCBI Taxonomy" id="50207"/>
</organismHost>
<proteinExistence type="evidence at transcript level"/>
<protein>
    <recommendedName>
        <fullName>Spike glycoprotein</fullName>
    </recommendedName>
</protein>
<dbReference type="EMBL" id="L32603">
    <property type="protein sequence ID" value="AAA50384.1"/>
    <property type="molecule type" value="mRNA"/>
</dbReference>
<dbReference type="EMBL" id="M73626">
    <property type="protein sequence ID" value="AAA47898.1"/>
    <property type="molecule type" value="Genomic_RNA"/>
</dbReference>
<dbReference type="PIR" id="A40776">
    <property type="entry name" value="VGVNSY"/>
</dbReference>
<dbReference type="RefSeq" id="NP_042285.1">
    <property type="nucleotide sequence ID" value="NC_001615.3"/>
</dbReference>
<dbReference type="SMR" id="P27277"/>
<dbReference type="GlyCosmos" id="P27277">
    <property type="glycosylation" value="5 sites, No reported glycans"/>
</dbReference>
<dbReference type="GeneID" id="1489881"/>
<dbReference type="KEGG" id="vg:1489881"/>
<dbReference type="OrthoDB" id="4323at10239"/>
<dbReference type="Proteomes" id="UP000002326">
    <property type="component" value="Genome"/>
</dbReference>
<dbReference type="GO" id="GO:0016020">
    <property type="term" value="C:membrane"/>
    <property type="evidence" value="ECO:0007669"/>
    <property type="project" value="UniProtKB-KW"/>
</dbReference>
<dbReference type="GO" id="GO:0019031">
    <property type="term" value="C:viral envelope"/>
    <property type="evidence" value="ECO:0007669"/>
    <property type="project" value="UniProtKB-KW"/>
</dbReference>
<dbReference type="GO" id="GO:0055036">
    <property type="term" value="C:virion membrane"/>
    <property type="evidence" value="ECO:0007669"/>
    <property type="project" value="UniProtKB-SubCell"/>
</dbReference>
<dbReference type="GO" id="GO:0046718">
    <property type="term" value="P:symbiont entry into host cell"/>
    <property type="evidence" value="ECO:0007669"/>
    <property type="project" value="UniProtKB-KW"/>
</dbReference>
<dbReference type="GO" id="GO:0019062">
    <property type="term" value="P:virion attachment to host cell"/>
    <property type="evidence" value="ECO:0007669"/>
    <property type="project" value="UniProtKB-KW"/>
</dbReference>
<gene>
    <name type="primary">G</name>
</gene>
<sequence length="632" mass="71093">MSHIMNLLVISFVLAGSSWSLLGYQDDFSSKRSGALASNPTYNLPQDKGYGRDMYQPYYICEPDNDGSALTLPSWHYSCKESCMGNHLKRVVNITGARWNYVGISIPVFKIVTNEVCYTSHENVWGYCSQYQISRPVATQKSDVSCITSSMWDNDKSPIGSLYNIVNSNEAECDYFSDITDCNRDYQIFKREGKLIKRSDDSPLELSIVTDGIRTDPASEYLSLDDVSWFWKLPNNDMSPPCGWEKTQKLSCSYTDTTDVIKCNSIGYTYNIQGISKKSTCAGNIYDTDGPFPFFYDAEEALMSTDDACGKAKQGKPDADIAFIEGVNRAFEDLELTYCSATCDLFARQGTPNEDHVLDTPIGTWRYVMRDNLDPALVPCLPTSNWTISDPTTICHGKDHILVVDTATGHSGSWDTKKDYIITGEVCNTNNDEMGDDYDGMRDKILRGETIEIKFWTGDIIRMAPPYDNPEWIKGSVLFRQNPGWFSSVELNKDMIHTRDNITDLLTVMVQNATAEVMYKRLDPKTMKHILFAEIVDGVGNVSGKISGFLTGLFGGFTKAVIIVASLAICYIVLSVLWKVRLVASIFNSAKKKRVRISDILDEEPHRIQQSRPTLSRKKKTRESIQMLLNDI</sequence>
<comment type="function">
    <text>This protein forms spikes on the surface of the virion. It is responsible both for the binding of the virus to susceptible host cells and for inducing the uptake of the virus by the cell. The interaction between the internal components of the virion and the portion of the glycoprotein exposed on the cytoplasmic face of the plasma membrane probably directs envelopment and virus budding.</text>
</comment>
<comment type="subcellular location">
    <subcellularLocation>
        <location evidence="1">Virion membrane</location>
        <topology evidence="1">Single-pass type I membrane protein</topology>
    </subcellularLocation>
</comment>
<comment type="similarity">
    <text evidence="3">Belongs to the nucleorhabdovirus glycoprotein family.</text>
</comment>
<organism>
    <name type="scientific">Sonchus yellow net virus</name>
    <name type="common">SYNV</name>
    <dbReference type="NCBI Taxonomy" id="11307"/>
    <lineage>
        <taxon>Viruses</taxon>
        <taxon>Riboviria</taxon>
        <taxon>Orthornavirae</taxon>
        <taxon>Negarnaviricota</taxon>
        <taxon>Haploviricotina</taxon>
        <taxon>Monjiviricetes</taxon>
        <taxon>Mononegavirales</taxon>
        <taxon>Rhabdoviridae</taxon>
        <taxon>Betarhabdovirinae</taxon>
        <taxon>Betanucleorhabdovirus</taxon>
        <taxon>Betanucleorhabdovirus retesonchi</taxon>
    </lineage>
</organism>
<keyword id="KW-0325">Glycoprotein</keyword>
<keyword id="KW-0945">Host-virus interaction</keyword>
<keyword id="KW-0472">Membrane</keyword>
<keyword id="KW-1185">Reference proteome</keyword>
<keyword id="KW-0732">Signal</keyword>
<keyword id="KW-0812">Transmembrane</keyword>
<keyword id="KW-1133">Transmembrane helix</keyword>
<keyword id="KW-1161">Viral attachment to host cell</keyword>
<keyword id="KW-0261">Viral envelope protein</keyword>
<keyword id="KW-0946">Virion</keyword>
<keyword id="KW-1160">Virus entry into host cell</keyword>
<name>GLYCO_SYNV</name>
<accession>P27277</accession>